<feature type="chain" id="PRO_1000090333" description="Holliday junction branch migration complex subunit RuvA">
    <location>
        <begin position="1"/>
        <end position="191"/>
    </location>
</feature>
<feature type="region of interest" description="Domain I" evidence="1">
    <location>
        <begin position="1"/>
        <end position="64"/>
    </location>
</feature>
<feature type="region of interest" description="Domain II" evidence="1">
    <location>
        <begin position="65"/>
        <end position="138"/>
    </location>
</feature>
<feature type="region of interest" description="Flexible linker" evidence="1">
    <location>
        <begin position="138"/>
        <end position="142"/>
    </location>
</feature>
<feature type="region of interest" description="Domain III" evidence="1">
    <location>
        <begin position="143"/>
        <end position="191"/>
    </location>
</feature>
<evidence type="ECO:0000255" key="1">
    <source>
        <dbReference type="HAMAP-Rule" id="MF_00031"/>
    </source>
</evidence>
<proteinExistence type="inferred from homology"/>
<comment type="function">
    <text evidence="1">The RuvA-RuvB-RuvC complex processes Holliday junction (HJ) DNA during genetic recombination and DNA repair, while the RuvA-RuvB complex plays an important role in the rescue of blocked DNA replication forks via replication fork reversal (RFR). RuvA specifically binds to HJ cruciform DNA, conferring on it an open structure. The RuvB hexamer acts as an ATP-dependent pump, pulling dsDNA into and through the RuvAB complex. HJ branch migration allows RuvC to scan DNA until it finds its consensus sequence, where it cleaves and resolves the cruciform DNA.</text>
</comment>
<comment type="subunit">
    <text evidence="1">Homotetramer. Forms an RuvA(8)-RuvB(12)-Holliday junction (HJ) complex. HJ DNA is sandwiched between 2 RuvA tetramers; dsDNA enters through RuvA and exits via RuvB. An RuvB hexamer assembles on each DNA strand where it exits the tetramer. Each RuvB hexamer is contacted by two RuvA subunits (via domain III) on 2 adjacent RuvB subunits; this complex drives branch migration. In the full resolvosome a probable DNA-RuvA(4)-RuvB(12)-RuvC(2) complex forms which resolves the HJ.</text>
</comment>
<comment type="subcellular location">
    <subcellularLocation>
        <location evidence="1">Cytoplasm</location>
    </subcellularLocation>
</comment>
<comment type="domain">
    <text evidence="1">Has three domains with a flexible linker between the domains II and III and assumes an 'L' shape. Domain III is highly mobile and contacts RuvB.</text>
</comment>
<comment type="similarity">
    <text evidence="1">Belongs to the RuvA family.</text>
</comment>
<accession>B1Y8E1</accession>
<dbReference type="EMBL" id="CP001013">
    <property type="protein sequence ID" value="ACB36207.1"/>
    <property type="molecule type" value="Genomic_DNA"/>
</dbReference>
<dbReference type="RefSeq" id="WP_012348952.1">
    <property type="nucleotide sequence ID" value="NC_010524.1"/>
</dbReference>
<dbReference type="SMR" id="B1Y8E1"/>
<dbReference type="STRING" id="395495.Lcho_3953"/>
<dbReference type="KEGG" id="lch:Lcho_3953"/>
<dbReference type="eggNOG" id="COG0632">
    <property type="taxonomic scope" value="Bacteria"/>
</dbReference>
<dbReference type="HOGENOM" id="CLU_087936_0_0_4"/>
<dbReference type="OrthoDB" id="5293449at2"/>
<dbReference type="Proteomes" id="UP000001693">
    <property type="component" value="Chromosome"/>
</dbReference>
<dbReference type="GO" id="GO:0005737">
    <property type="term" value="C:cytoplasm"/>
    <property type="evidence" value="ECO:0007669"/>
    <property type="project" value="UniProtKB-SubCell"/>
</dbReference>
<dbReference type="GO" id="GO:0009379">
    <property type="term" value="C:Holliday junction helicase complex"/>
    <property type="evidence" value="ECO:0007669"/>
    <property type="project" value="InterPro"/>
</dbReference>
<dbReference type="GO" id="GO:0048476">
    <property type="term" value="C:Holliday junction resolvase complex"/>
    <property type="evidence" value="ECO:0007669"/>
    <property type="project" value="UniProtKB-UniRule"/>
</dbReference>
<dbReference type="GO" id="GO:0005524">
    <property type="term" value="F:ATP binding"/>
    <property type="evidence" value="ECO:0007669"/>
    <property type="project" value="InterPro"/>
</dbReference>
<dbReference type="GO" id="GO:0000400">
    <property type="term" value="F:four-way junction DNA binding"/>
    <property type="evidence" value="ECO:0007669"/>
    <property type="project" value="UniProtKB-UniRule"/>
</dbReference>
<dbReference type="GO" id="GO:0009378">
    <property type="term" value="F:four-way junction helicase activity"/>
    <property type="evidence" value="ECO:0007669"/>
    <property type="project" value="InterPro"/>
</dbReference>
<dbReference type="GO" id="GO:0006310">
    <property type="term" value="P:DNA recombination"/>
    <property type="evidence" value="ECO:0007669"/>
    <property type="project" value="UniProtKB-UniRule"/>
</dbReference>
<dbReference type="GO" id="GO:0006281">
    <property type="term" value="P:DNA repair"/>
    <property type="evidence" value="ECO:0007669"/>
    <property type="project" value="UniProtKB-UniRule"/>
</dbReference>
<dbReference type="CDD" id="cd14332">
    <property type="entry name" value="UBA_RuvA_C"/>
    <property type="match status" value="1"/>
</dbReference>
<dbReference type="Gene3D" id="1.10.150.20">
    <property type="entry name" value="5' to 3' exonuclease, C-terminal subdomain"/>
    <property type="match status" value="1"/>
</dbReference>
<dbReference type="Gene3D" id="1.10.8.10">
    <property type="entry name" value="DNA helicase RuvA subunit, C-terminal domain"/>
    <property type="match status" value="1"/>
</dbReference>
<dbReference type="Gene3D" id="2.40.50.140">
    <property type="entry name" value="Nucleic acid-binding proteins"/>
    <property type="match status" value="1"/>
</dbReference>
<dbReference type="HAMAP" id="MF_00031">
    <property type="entry name" value="DNA_HJ_migration_RuvA"/>
    <property type="match status" value="1"/>
</dbReference>
<dbReference type="InterPro" id="IPR013849">
    <property type="entry name" value="DNA_helicase_Holl-junc_RuvA_I"/>
</dbReference>
<dbReference type="InterPro" id="IPR003583">
    <property type="entry name" value="Hlx-hairpin-Hlx_DNA-bd_motif"/>
</dbReference>
<dbReference type="InterPro" id="IPR012340">
    <property type="entry name" value="NA-bd_OB-fold"/>
</dbReference>
<dbReference type="InterPro" id="IPR000085">
    <property type="entry name" value="RuvA"/>
</dbReference>
<dbReference type="InterPro" id="IPR010994">
    <property type="entry name" value="RuvA_2-like"/>
</dbReference>
<dbReference type="InterPro" id="IPR011114">
    <property type="entry name" value="RuvA_C"/>
</dbReference>
<dbReference type="InterPro" id="IPR036267">
    <property type="entry name" value="RuvA_C_sf"/>
</dbReference>
<dbReference type="NCBIfam" id="TIGR00084">
    <property type="entry name" value="ruvA"/>
    <property type="match status" value="1"/>
</dbReference>
<dbReference type="Pfam" id="PF14520">
    <property type="entry name" value="HHH_5"/>
    <property type="match status" value="1"/>
</dbReference>
<dbReference type="Pfam" id="PF07499">
    <property type="entry name" value="RuvA_C"/>
    <property type="match status" value="1"/>
</dbReference>
<dbReference type="Pfam" id="PF01330">
    <property type="entry name" value="RuvA_N"/>
    <property type="match status" value="1"/>
</dbReference>
<dbReference type="SMART" id="SM00278">
    <property type="entry name" value="HhH1"/>
    <property type="match status" value="2"/>
</dbReference>
<dbReference type="SUPFAM" id="SSF46929">
    <property type="entry name" value="DNA helicase RuvA subunit, C-terminal domain"/>
    <property type="match status" value="1"/>
</dbReference>
<dbReference type="SUPFAM" id="SSF50249">
    <property type="entry name" value="Nucleic acid-binding proteins"/>
    <property type="match status" value="1"/>
</dbReference>
<dbReference type="SUPFAM" id="SSF47781">
    <property type="entry name" value="RuvA domain 2-like"/>
    <property type="match status" value="1"/>
</dbReference>
<reference key="1">
    <citation type="submission" date="2008-03" db="EMBL/GenBank/DDBJ databases">
        <title>Complete sequence of Leptothrix cholodnii SP-6.</title>
        <authorList>
            <consortium name="US DOE Joint Genome Institute"/>
            <person name="Copeland A."/>
            <person name="Lucas S."/>
            <person name="Lapidus A."/>
            <person name="Glavina del Rio T."/>
            <person name="Dalin E."/>
            <person name="Tice H."/>
            <person name="Bruce D."/>
            <person name="Goodwin L."/>
            <person name="Pitluck S."/>
            <person name="Chertkov O."/>
            <person name="Brettin T."/>
            <person name="Detter J.C."/>
            <person name="Han C."/>
            <person name="Kuske C.R."/>
            <person name="Schmutz J."/>
            <person name="Larimer F."/>
            <person name="Land M."/>
            <person name="Hauser L."/>
            <person name="Kyrpides N."/>
            <person name="Lykidis A."/>
            <person name="Emerson D."/>
            <person name="Richardson P."/>
        </authorList>
    </citation>
    <scope>NUCLEOTIDE SEQUENCE [LARGE SCALE GENOMIC DNA]</scope>
    <source>
        <strain>ATCC 51168 / LMG 8142 / SP-6</strain>
    </source>
</reference>
<name>RUVA_LEPCP</name>
<sequence>MIGRLTGTLAEKSPPQLLVDVGGVGYEVDVPMSTFYNLPVLGERVTLLTHFVVREDAQLLYGFLTATERATFRQLLKISGVGARTALSILSGLSVADLAQAVSAQEAGRLVKVPGIGKKTAERLLLELKGKLGPDLALPGAVIRNEAQSDIVQALIALGYNEREAAAAIKPLPADVGVSDGIKLALRALGK</sequence>
<organism>
    <name type="scientific">Leptothrix cholodnii (strain ATCC 51168 / LMG 8142 / SP-6)</name>
    <name type="common">Leptothrix discophora (strain SP-6)</name>
    <dbReference type="NCBI Taxonomy" id="395495"/>
    <lineage>
        <taxon>Bacteria</taxon>
        <taxon>Pseudomonadati</taxon>
        <taxon>Pseudomonadota</taxon>
        <taxon>Betaproteobacteria</taxon>
        <taxon>Burkholderiales</taxon>
        <taxon>Sphaerotilaceae</taxon>
        <taxon>Leptothrix</taxon>
    </lineage>
</organism>
<keyword id="KW-0963">Cytoplasm</keyword>
<keyword id="KW-0227">DNA damage</keyword>
<keyword id="KW-0233">DNA recombination</keyword>
<keyword id="KW-0234">DNA repair</keyword>
<keyword id="KW-0238">DNA-binding</keyword>
<keyword id="KW-1185">Reference proteome</keyword>
<gene>
    <name evidence="1" type="primary">ruvA</name>
    <name type="ordered locus">Lcho_3953</name>
</gene>
<protein>
    <recommendedName>
        <fullName evidence="1">Holliday junction branch migration complex subunit RuvA</fullName>
    </recommendedName>
</protein>